<organism>
    <name type="scientific">Mycobacterium tuberculosis (strain CDC 1551 / Oshkosh)</name>
    <dbReference type="NCBI Taxonomy" id="83331"/>
    <lineage>
        <taxon>Bacteria</taxon>
        <taxon>Bacillati</taxon>
        <taxon>Actinomycetota</taxon>
        <taxon>Actinomycetes</taxon>
        <taxon>Mycobacteriales</taxon>
        <taxon>Mycobacteriaceae</taxon>
        <taxon>Mycobacterium</taxon>
        <taxon>Mycobacterium tuberculosis complex</taxon>
    </lineage>
</organism>
<accession>P9WGY4</accession>
<accession>L0T993</accession>
<accession>P66721</accession>
<accession>P71660</accession>
<reference key="1">
    <citation type="journal article" date="2002" name="J. Bacteriol.">
        <title>Whole-genome comparison of Mycobacterium tuberculosis clinical and laboratory strains.</title>
        <authorList>
            <person name="Fleischmann R.D."/>
            <person name="Alland D."/>
            <person name="Eisen J.A."/>
            <person name="Carpenter L."/>
            <person name="White O."/>
            <person name="Peterson J.D."/>
            <person name="DeBoy R.T."/>
            <person name="Dodson R.J."/>
            <person name="Gwinn M.L."/>
            <person name="Haft D.H."/>
            <person name="Hickey E.K."/>
            <person name="Kolonay J.F."/>
            <person name="Nelson W.C."/>
            <person name="Umayam L.A."/>
            <person name="Ermolaeva M.D."/>
            <person name="Salzberg S.L."/>
            <person name="Delcher A."/>
            <person name="Utterback T.R."/>
            <person name="Weidman J.F."/>
            <person name="Khouri H.M."/>
            <person name="Gill J."/>
            <person name="Mikula A."/>
            <person name="Bishai W."/>
            <person name="Jacobs W.R. Jr."/>
            <person name="Venter J.C."/>
            <person name="Fraser C.M."/>
        </authorList>
    </citation>
    <scope>NUCLEOTIDE SEQUENCE [LARGE SCALE GENOMIC DNA]</scope>
    <source>
        <strain>CDC 1551 / Oshkosh</strain>
    </source>
</reference>
<keyword id="KW-0240">DNA-directed RNA polymerase</keyword>
<keyword id="KW-0548">Nucleotidyltransferase</keyword>
<keyword id="KW-1185">Reference proteome</keyword>
<keyword id="KW-0804">Transcription</keyword>
<keyword id="KW-0808">Transferase</keyword>
<evidence type="ECO:0000250" key="1"/>
<evidence type="ECO:0000305" key="2"/>
<sequence>MSISQSDASLAAVPAVDQFDPSSGASGGYDTPLGITNPPIDELLDRVSSKYALVIYAAKRARQINDYYNQLGEGILEYVGPLVEPGLQEKPLSIALREIHADLLEHTEGE</sequence>
<proteinExistence type="inferred from homology"/>
<protein>
    <recommendedName>
        <fullName>DNA-directed RNA polymerase subunit omega</fullName>
        <shortName>RNAP omega subunit</shortName>
        <ecNumber>2.7.7.6</ecNumber>
    </recommendedName>
    <alternativeName>
        <fullName>RNA polymerase omega subunit</fullName>
    </alternativeName>
    <alternativeName>
        <fullName>Transcriptase subunit omega</fullName>
    </alternativeName>
</protein>
<comment type="function">
    <text evidence="1">Promotes RNA polymerase assembly. Latches the N- and C-terminal regions of the beta' subunit thereby facilitating its interaction with the beta and alpha subunits (By similarity).</text>
</comment>
<comment type="catalytic activity">
    <reaction>
        <text>RNA(n) + a ribonucleoside 5'-triphosphate = RNA(n+1) + diphosphate</text>
        <dbReference type="Rhea" id="RHEA:21248"/>
        <dbReference type="Rhea" id="RHEA-COMP:14527"/>
        <dbReference type="Rhea" id="RHEA-COMP:17342"/>
        <dbReference type="ChEBI" id="CHEBI:33019"/>
        <dbReference type="ChEBI" id="CHEBI:61557"/>
        <dbReference type="ChEBI" id="CHEBI:140395"/>
        <dbReference type="EC" id="2.7.7.6"/>
    </reaction>
</comment>
<comment type="subunit">
    <text evidence="1">The RNAP catalytic core consists of 2 alpha, 1 beta, 1 beta' and 1 omega subunit. When a sigma factor is associated with the core the holoenzyme is formed, which can initiate transcription (By similarity).</text>
</comment>
<comment type="similarity">
    <text evidence="2">Belongs to the RNA polymerase subunit omega family.</text>
</comment>
<comment type="sequence caution" evidence="2">
    <conflict type="erroneous initiation">
        <sequence resource="EMBL-CDS" id="AAK45700"/>
    </conflict>
    <text>Extended N-terminus.</text>
</comment>
<dbReference type="EC" id="2.7.7.6"/>
<dbReference type="EMBL" id="AE000516">
    <property type="protein sequence ID" value="AAK45700.1"/>
    <property type="status" value="ALT_INIT"/>
    <property type="molecule type" value="Genomic_DNA"/>
</dbReference>
<dbReference type="PIR" id="D70899">
    <property type="entry name" value="D70899"/>
</dbReference>
<dbReference type="RefSeq" id="WP_003407248.1">
    <property type="nucleotide sequence ID" value="NZ_KK341227.1"/>
</dbReference>
<dbReference type="EMDB" id="EMD-14696"/>
<dbReference type="EMDB" id="EMD-14697"/>
<dbReference type="SMR" id="P9WGY4"/>
<dbReference type="GeneID" id="45425368"/>
<dbReference type="KEGG" id="mtc:MT1435"/>
<dbReference type="PATRIC" id="fig|83331.31.peg.1541"/>
<dbReference type="HOGENOM" id="CLU_125406_1_1_11"/>
<dbReference type="Proteomes" id="UP000001020">
    <property type="component" value="Chromosome"/>
</dbReference>
<dbReference type="GO" id="GO:0000428">
    <property type="term" value="C:DNA-directed RNA polymerase complex"/>
    <property type="evidence" value="ECO:0007669"/>
    <property type="project" value="UniProtKB-KW"/>
</dbReference>
<dbReference type="GO" id="GO:0003677">
    <property type="term" value="F:DNA binding"/>
    <property type="evidence" value="ECO:0007669"/>
    <property type="project" value="UniProtKB-UniRule"/>
</dbReference>
<dbReference type="GO" id="GO:0003899">
    <property type="term" value="F:DNA-directed RNA polymerase activity"/>
    <property type="evidence" value="ECO:0007669"/>
    <property type="project" value="UniProtKB-UniRule"/>
</dbReference>
<dbReference type="GO" id="GO:0006351">
    <property type="term" value="P:DNA-templated transcription"/>
    <property type="evidence" value="ECO:0007669"/>
    <property type="project" value="UniProtKB-UniRule"/>
</dbReference>
<dbReference type="FunFam" id="3.90.940.10:FF:000002">
    <property type="entry name" value="DNA-directed RNA polymerase subunit omega"/>
    <property type="match status" value="1"/>
</dbReference>
<dbReference type="Gene3D" id="3.90.940.10">
    <property type="match status" value="1"/>
</dbReference>
<dbReference type="HAMAP" id="MF_00366">
    <property type="entry name" value="RNApol_bact_RpoZ"/>
    <property type="match status" value="1"/>
</dbReference>
<dbReference type="InterPro" id="IPR003716">
    <property type="entry name" value="DNA-dir_RNA_pol_omega"/>
</dbReference>
<dbReference type="InterPro" id="IPR006110">
    <property type="entry name" value="Pol_omega/Rpo6/RPB6"/>
</dbReference>
<dbReference type="InterPro" id="IPR036161">
    <property type="entry name" value="RPB6/omega-like_sf"/>
</dbReference>
<dbReference type="NCBIfam" id="TIGR00690">
    <property type="entry name" value="rpoZ"/>
    <property type="match status" value="1"/>
</dbReference>
<dbReference type="PANTHER" id="PTHR34476">
    <property type="entry name" value="DNA-DIRECTED RNA POLYMERASE SUBUNIT OMEGA"/>
    <property type="match status" value="1"/>
</dbReference>
<dbReference type="PANTHER" id="PTHR34476:SF1">
    <property type="entry name" value="DNA-DIRECTED RNA POLYMERASE SUBUNIT OMEGA"/>
    <property type="match status" value="1"/>
</dbReference>
<dbReference type="Pfam" id="PF01192">
    <property type="entry name" value="RNA_pol_Rpb6"/>
    <property type="match status" value="1"/>
</dbReference>
<dbReference type="SMART" id="SM01409">
    <property type="entry name" value="RNA_pol_Rpb6"/>
    <property type="match status" value="1"/>
</dbReference>
<dbReference type="SUPFAM" id="SSF63562">
    <property type="entry name" value="RPB6/omega subunit-like"/>
    <property type="match status" value="1"/>
</dbReference>
<feature type="chain" id="PRO_0000428281" description="DNA-directed RNA polymerase subunit omega">
    <location>
        <begin position="1"/>
        <end position="110"/>
    </location>
</feature>
<name>RPOZ_MYCTO</name>
<gene>
    <name type="primary">rpoZ</name>
    <name type="ordered locus">MT1435</name>
</gene>